<evidence type="ECO:0000250" key="1"/>
<evidence type="ECO:0000250" key="2">
    <source>
        <dbReference type="UniProtKB" id="P00157"/>
    </source>
</evidence>
<evidence type="ECO:0000255" key="3">
    <source>
        <dbReference type="PROSITE-ProRule" id="PRU00967"/>
    </source>
</evidence>
<evidence type="ECO:0000255" key="4">
    <source>
        <dbReference type="PROSITE-ProRule" id="PRU00968"/>
    </source>
</evidence>
<feature type="chain" id="PRO_0000257945" description="Cytochrome b">
    <location>
        <begin position="1"/>
        <end position="379"/>
    </location>
</feature>
<feature type="transmembrane region" description="Helical" evidence="2">
    <location>
        <begin position="33"/>
        <end position="53"/>
    </location>
</feature>
<feature type="transmembrane region" description="Helical" evidence="2">
    <location>
        <begin position="77"/>
        <end position="98"/>
    </location>
</feature>
<feature type="transmembrane region" description="Helical" evidence="2">
    <location>
        <begin position="113"/>
        <end position="133"/>
    </location>
</feature>
<feature type="transmembrane region" description="Helical" evidence="2">
    <location>
        <begin position="178"/>
        <end position="198"/>
    </location>
</feature>
<feature type="transmembrane region" description="Helical" evidence="2">
    <location>
        <begin position="226"/>
        <end position="246"/>
    </location>
</feature>
<feature type="transmembrane region" description="Helical" evidence="2">
    <location>
        <begin position="288"/>
        <end position="308"/>
    </location>
</feature>
<feature type="transmembrane region" description="Helical" evidence="2">
    <location>
        <begin position="320"/>
        <end position="340"/>
    </location>
</feature>
<feature type="transmembrane region" description="Helical" evidence="2">
    <location>
        <begin position="347"/>
        <end position="367"/>
    </location>
</feature>
<feature type="binding site" description="axial binding residue" evidence="2">
    <location>
        <position position="83"/>
    </location>
    <ligand>
        <name>heme b</name>
        <dbReference type="ChEBI" id="CHEBI:60344"/>
        <label>b562</label>
    </ligand>
    <ligandPart>
        <name>Fe</name>
        <dbReference type="ChEBI" id="CHEBI:18248"/>
    </ligandPart>
</feature>
<feature type="binding site" description="axial binding residue" evidence="2">
    <location>
        <position position="97"/>
    </location>
    <ligand>
        <name>heme b</name>
        <dbReference type="ChEBI" id="CHEBI:60344"/>
        <label>b566</label>
    </ligand>
    <ligandPart>
        <name>Fe</name>
        <dbReference type="ChEBI" id="CHEBI:18248"/>
    </ligandPart>
</feature>
<feature type="binding site" description="axial binding residue" evidence="2">
    <location>
        <position position="182"/>
    </location>
    <ligand>
        <name>heme b</name>
        <dbReference type="ChEBI" id="CHEBI:60344"/>
        <label>b562</label>
    </ligand>
    <ligandPart>
        <name>Fe</name>
        <dbReference type="ChEBI" id="CHEBI:18248"/>
    </ligandPart>
</feature>
<feature type="binding site" description="axial binding residue" evidence="2">
    <location>
        <position position="196"/>
    </location>
    <ligand>
        <name>heme b</name>
        <dbReference type="ChEBI" id="CHEBI:60344"/>
        <label>b566</label>
    </ligand>
    <ligandPart>
        <name>Fe</name>
        <dbReference type="ChEBI" id="CHEBI:18248"/>
    </ligandPart>
</feature>
<feature type="binding site" evidence="2">
    <location>
        <position position="201"/>
    </location>
    <ligand>
        <name>a ubiquinone</name>
        <dbReference type="ChEBI" id="CHEBI:16389"/>
    </ligand>
</feature>
<geneLocation type="mitochondrion"/>
<proteinExistence type="inferred from homology"/>
<organism>
    <name type="scientific">Tamias canipes</name>
    <name type="common">Gray-footed chipmunk</name>
    <dbReference type="NCBI Taxonomy" id="45466"/>
    <lineage>
        <taxon>Eukaryota</taxon>
        <taxon>Metazoa</taxon>
        <taxon>Chordata</taxon>
        <taxon>Craniata</taxon>
        <taxon>Vertebrata</taxon>
        <taxon>Euteleostomi</taxon>
        <taxon>Mammalia</taxon>
        <taxon>Eutheria</taxon>
        <taxon>Euarchontoglires</taxon>
        <taxon>Glires</taxon>
        <taxon>Rodentia</taxon>
        <taxon>Sciuromorpha</taxon>
        <taxon>Sciuridae</taxon>
        <taxon>Xerinae</taxon>
        <taxon>Marmotini</taxon>
        <taxon>Tamias</taxon>
    </lineage>
</organism>
<name>CYB_TAMCA</name>
<sequence length="379" mass="43096">MTNIRKTHPLIKIINHSFIDLPAPSNISAWWNFGSLLGICLIIQILTGLFLAMHYTSDTMTAFSSVTHICRDVNYGWLIRYMHANGASMFFICLFLHVGRGLYYGSYTYFETWNIGVILLFAVMATAFMGYVLPWGQMSFWGATVITNLLSAIPYIGTTLVEWIWGGFSVDKATLTRFFAFHFILPFIITALVMVHLLFLHETGSNNPSGLISDSDKIPFHPYYTIKDILGILLLILVLMILVLFSPDLLGDPDNYTPANPLNTPPHIKPEWYFLFAYAILRSIPNKLGGVLALVLSILILMLFPILHMSKQRSMMFRPLSQCMFWILVADLFTLTWIGGQPVEYPFIIIGQLASILYFMIILLILPAISLFENKLLKW</sequence>
<keyword id="KW-0249">Electron transport</keyword>
<keyword id="KW-0349">Heme</keyword>
<keyword id="KW-0408">Iron</keyword>
<keyword id="KW-0472">Membrane</keyword>
<keyword id="KW-0479">Metal-binding</keyword>
<keyword id="KW-0496">Mitochondrion</keyword>
<keyword id="KW-0999">Mitochondrion inner membrane</keyword>
<keyword id="KW-0679">Respiratory chain</keyword>
<keyword id="KW-0812">Transmembrane</keyword>
<keyword id="KW-1133">Transmembrane helix</keyword>
<keyword id="KW-0813">Transport</keyword>
<keyword id="KW-0830">Ubiquinone</keyword>
<dbReference type="EMBL" id="AF147635">
    <property type="protein sequence ID" value="AAL14034.1"/>
    <property type="molecule type" value="Genomic_DNA"/>
</dbReference>
<dbReference type="RefSeq" id="YP_009332061.1">
    <property type="nucleotide sequence ID" value="NC_032372.1"/>
</dbReference>
<dbReference type="SMR" id="Q94Y71"/>
<dbReference type="GeneID" id="30688877"/>
<dbReference type="CTD" id="4519"/>
<dbReference type="GO" id="GO:0005743">
    <property type="term" value="C:mitochondrial inner membrane"/>
    <property type="evidence" value="ECO:0007669"/>
    <property type="project" value="UniProtKB-SubCell"/>
</dbReference>
<dbReference type="GO" id="GO:0045275">
    <property type="term" value="C:respiratory chain complex III"/>
    <property type="evidence" value="ECO:0007669"/>
    <property type="project" value="InterPro"/>
</dbReference>
<dbReference type="GO" id="GO:0046872">
    <property type="term" value="F:metal ion binding"/>
    <property type="evidence" value="ECO:0007669"/>
    <property type="project" value="UniProtKB-KW"/>
</dbReference>
<dbReference type="GO" id="GO:0008121">
    <property type="term" value="F:ubiquinol-cytochrome-c reductase activity"/>
    <property type="evidence" value="ECO:0007669"/>
    <property type="project" value="InterPro"/>
</dbReference>
<dbReference type="GO" id="GO:0006122">
    <property type="term" value="P:mitochondrial electron transport, ubiquinol to cytochrome c"/>
    <property type="evidence" value="ECO:0007669"/>
    <property type="project" value="TreeGrafter"/>
</dbReference>
<dbReference type="CDD" id="cd00290">
    <property type="entry name" value="cytochrome_b_C"/>
    <property type="match status" value="1"/>
</dbReference>
<dbReference type="CDD" id="cd00284">
    <property type="entry name" value="Cytochrome_b_N"/>
    <property type="match status" value="1"/>
</dbReference>
<dbReference type="FunFam" id="1.20.810.10:FF:000002">
    <property type="entry name" value="Cytochrome b"/>
    <property type="match status" value="1"/>
</dbReference>
<dbReference type="Gene3D" id="1.20.810.10">
    <property type="entry name" value="Cytochrome Bc1 Complex, Chain C"/>
    <property type="match status" value="1"/>
</dbReference>
<dbReference type="InterPro" id="IPR005798">
    <property type="entry name" value="Cyt_b/b6_C"/>
</dbReference>
<dbReference type="InterPro" id="IPR036150">
    <property type="entry name" value="Cyt_b/b6_C_sf"/>
</dbReference>
<dbReference type="InterPro" id="IPR005797">
    <property type="entry name" value="Cyt_b/b6_N"/>
</dbReference>
<dbReference type="InterPro" id="IPR027387">
    <property type="entry name" value="Cytb/b6-like_sf"/>
</dbReference>
<dbReference type="InterPro" id="IPR030689">
    <property type="entry name" value="Cytochrome_b"/>
</dbReference>
<dbReference type="InterPro" id="IPR048260">
    <property type="entry name" value="Cytochrome_b_C_euk/bac"/>
</dbReference>
<dbReference type="InterPro" id="IPR048259">
    <property type="entry name" value="Cytochrome_b_N_euk/bac"/>
</dbReference>
<dbReference type="InterPro" id="IPR016174">
    <property type="entry name" value="Di-haem_cyt_TM"/>
</dbReference>
<dbReference type="PANTHER" id="PTHR19271">
    <property type="entry name" value="CYTOCHROME B"/>
    <property type="match status" value="1"/>
</dbReference>
<dbReference type="PANTHER" id="PTHR19271:SF16">
    <property type="entry name" value="CYTOCHROME B"/>
    <property type="match status" value="1"/>
</dbReference>
<dbReference type="Pfam" id="PF00032">
    <property type="entry name" value="Cytochrom_B_C"/>
    <property type="match status" value="1"/>
</dbReference>
<dbReference type="Pfam" id="PF00033">
    <property type="entry name" value="Cytochrome_B"/>
    <property type="match status" value="1"/>
</dbReference>
<dbReference type="PIRSF" id="PIRSF038885">
    <property type="entry name" value="COB"/>
    <property type="match status" value="1"/>
</dbReference>
<dbReference type="SUPFAM" id="SSF81648">
    <property type="entry name" value="a domain/subunit of cytochrome bc1 complex (Ubiquinol-cytochrome c reductase)"/>
    <property type="match status" value="1"/>
</dbReference>
<dbReference type="SUPFAM" id="SSF81342">
    <property type="entry name" value="Transmembrane di-heme cytochromes"/>
    <property type="match status" value="1"/>
</dbReference>
<dbReference type="PROSITE" id="PS51003">
    <property type="entry name" value="CYTB_CTER"/>
    <property type="match status" value="1"/>
</dbReference>
<dbReference type="PROSITE" id="PS51002">
    <property type="entry name" value="CYTB_NTER"/>
    <property type="match status" value="1"/>
</dbReference>
<accession>Q94Y71</accession>
<gene>
    <name type="primary">MT-CYB</name>
    <name type="synonym">COB</name>
    <name type="synonym">CYTB</name>
    <name type="synonym">MTCYB</name>
</gene>
<protein>
    <recommendedName>
        <fullName>Cytochrome b</fullName>
    </recommendedName>
    <alternativeName>
        <fullName>Complex III subunit 3</fullName>
    </alternativeName>
    <alternativeName>
        <fullName>Complex III subunit III</fullName>
    </alternativeName>
    <alternativeName>
        <fullName>Cytochrome b-c1 complex subunit 3</fullName>
    </alternativeName>
    <alternativeName>
        <fullName>Ubiquinol-cytochrome-c reductase complex cytochrome b subunit</fullName>
    </alternativeName>
</protein>
<reference key="1">
    <citation type="journal article" date="2001" name="Mol. Phylogenet. Evol.">
        <title>Molecular phylogeny of the chipmunks inferred from mitochondrial cytochrome b and cytochrome oxidase II gene sequences.</title>
        <authorList>
            <person name="Piaggio A.J."/>
            <person name="Spicer G.S."/>
        </authorList>
    </citation>
    <scope>NUCLEOTIDE SEQUENCE [GENOMIC DNA]</scope>
</reference>
<comment type="function">
    <text evidence="2">Component of the ubiquinol-cytochrome c reductase complex (complex III or cytochrome b-c1 complex) that is part of the mitochondrial respiratory chain. The b-c1 complex mediates electron transfer from ubiquinol to cytochrome c. Contributes to the generation of a proton gradient across the mitochondrial membrane that is then used for ATP synthesis.</text>
</comment>
<comment type="cofactor">
    <cofactor evidence="2">
        <name>heme b</name>
        <dbReference type="ChEBI" id="CHEBI:60344"/>
    </cofactor>
    <text evidence="2">Binds 2 heme b groups non-covalently.</text>
</comment>
<comment type="subunit">
    <text evidence="2">The cytochrome bc1 complex contains 11 subunits: 3 respiratory subunits (MT-CYB, CYC1 and UQCRFS1), 2 core proteins (UQCRC1 and UQCRC2) and 6 low-molecular weight proteins (UQCRH/QCR6, UQCRB/QCR7, UQCRQ/QCR8, UQCR10/QCR9, UQCR11/QCR10 and a cleavage product of UQCRFS1). This cytochrome bc1 complex then forms a dimer.</text>
</comment>
<comment type="subcellular location">
    <subcellularLocation>
        <location evidence="2">Mitochondrion inner membrane</location>
        <topology evidence="2">Multi-pass membrane protein</topology>
    </subcellularLocation>
</comment>
<comment type="miscellaneous">
    <text evidence="1">Heme 1 (or BL or b562) is low-potential and absorbs at about 562 nm, and heme 2 (or BH or b566) is high-potential and absorbs at about 566 nm.</text>
</comment>
<comment type="similarity">
    <text evidence="3 4">Belongs to the cytochrome b family.</text>
</comment>
<comment type="caution">
    <text evidence="2">The full-length protein contains only eight transmembrane helices, not nine as predicted by bioinformatics tools.</text>
</comment>